<sequence length="438" mass="49509">MTAGPMGNKSTSDIDSVLVYKSLSRYLKFSENEEGWWHKTAPLLNKILAAAKYDVHLQYRYLVFYYAACVSALGPYPQRFSSSITRSGLPVEFSVNYQNNSKPIVRIGYEPISHLSGTERDPYNHKTASEIVATLSKIQPDFDPRLFNYFVHQLSVNKAESDVLNGANVEGSEMKSQTAFGFDLVNGEISVKGYAFPAMKCQVSQQSLSQLLKAAINGLKGEFDCAFGLVDEYMERCGGYNQFSFVSWDCVVPAKSRFKVYGVHNDVTWKKIEDIWTLGGQATSGNVTKGLELLKELWTLIDLDEGERGYTGRFDDANDNGSNIQSPMVWNYELRPNNPWPLAKFYFPVHGENDMKIVKGLARFFENRGWTELARSYVQTVSSFFPDRDLNQTQRLVSWISFAYTEKTGVYLSVYYHSSADYLWISESGEKRGQGDGA</sequence>
<reference key="1">
    <citation type="journal article" date="2012" name="Med. Chem. Commun.">
        <title>Comparative analysis of the biosynthetic systems for fungal bicyclo[2.2.2]diazaoctane indole alkaloids: the (+)/(-)-notoamide, paraherquamide and malbrancheamide pathways.</title>
        <authorList>
            <person name="Li S."/>
            <person name="Anand K."/>
            <person name="Tran H."/>
            <person name="Yu F."/>
            <person name="Finefield J.M."/>
            <person name="Sunderhaus J.D."/>
            <person name="McAfoos T.J."/>
            <person name="Tsukamoto S."/>
            <person name="Williams R.M."/>
            <person name="Sherman D.H."/>
        </authorList>
    </citation>
    <scope>NUCLEOTIDE SEQUENCE [GENOMIC DNA]</scope>
    <scope>FUNCTION</scope>
    <source>
        <strain>RRC1813</strain>
    </source>
</reference>
<reference key="2">
    <citation type="journal article" date="2008" name="Bioorg. Med. Chem. Lett.">
        <title>Calmodulin inhibitory activity of the malbrancheamides and various analogs.</title>
        <authorList>
            <person name="Miller K.A."/>
            <person name="Figueroa M."/>
            <person name="Valente M.W."/>
            <person name="Greshock T.J."/>
            <person name="Mata R."/>
            <person name="Williams R.M."/>
        </authorList>
    </citation>
    <scope>BIOTECHNOLOGY</scope>
</reference>
<reference key="3">
    <citation type="journal article" date="2009" name="Anal. Biochem.">
        <title>An alternative assay to discover potential calmodulin inhibitors using a human fluorophore-labeled CaM protein.</title>
        <authorList>
            <person name="Gonzalez-Andrade M."/>
            <person name="Figueroa M."/>
            <person name="Rodriguez-Sotres R."/>
            <person name="Mata R."/>
            <person name="Sosa-Peinado A."/>
        </authorList>
    </citation>
    <scope>BIOTECHNOLOGY</scope>
</reference>
<reference key="4">
    <citation type="journal article" date="2011" name="J. Enzym. Inhib. Med. Chem.">
        <title>Fluorescence, circular dichroism, NMR, and docking studies of the interaction of the alkaloid malbrancheamide with calmodulin.</title>
        <authorList>
            <person name="Figueroa M."/>
            <person name="Gonzalez-Andrade M."/>
            <person name="Sosa-Peinado A."/>
            <person name="Madariaga-Mazon A."/>
            <person name="Del Rio-Portilla F."/>
            <person name="Gonzalez M.C."/>
            <person name="Mata R."/>
        </authorList>
    </citation>
    <scope>BIOTECHNOLOGY</scope>
</reference>
<reference key="5">
    <citation type="journal article" date="2015" name="J. Pharm. Pharmacol.">
        <title>Insights on the vasorelaxant mode of action of malbrancheamide.</title>
        <authorList>
            <person name="Madariaga-Mazon A."/>
            <person name="Hernandez-Abreu O."/>
            <person name="Estrada-Soto S."/>
            <person name="Mata R."/>
        </authorList>
    </citation>
    <scope>BIOTECHNOLOGY</scope>
</reference>
<reference key="6">
    <citation type="journal article" date="2017" name="J. Am. Chem. Soc.">
        <title>Function and structure of MalA/MalA', iterative halogenases for late-stage C-H functionalization of indole alkaloids.</title>
        <authorList>
            <person name="Fraley A.E."/>
            <person name="Garcia-Borras M."/>
            <person name="Tripathi A."/>
            <person name="Khare D."/>
            <person name="Mercado-Marin E.V."/>
            <person name="Tran H."/>
            <person name="Dan Q."/>
            <person name="Webb G.P."/>
            <person name="Watts K.R."/>
            <person name="Crews P."/>
            <person name="Sarpong R."/>
            <person name="Williams R.M."/>
            <person name="Smith J.L."/>
            <person name="Houk K.N."/>
            <person name="Sherman D.H."/>
        </authorList>
    </citation>
    <scope>FUNCTION</scope>
</reference>
<reference key="7">
    <citation type="journal article" date="2019" name="Nat. Chem.">
        <title>Fungal indole alkaloid biogenesis through evolution of a bifunctional reductase/Diels-Alderase.</title>
        <authorList>
            <person name="Dan Q."/>
            <person name="Newmister S.A."/>
            <person name="Klas K.R."/>
            <person name="Fraley A.E."/>
            <person name="McAfoos T.J."/>
            <person name="Somoza A.D."/>
            <person name="Sunderhaus J.D."/>
            <person name="Ye Y."/>
            <person name="Shende V.V."/>
            <person name="Yu F."/>
            <person name="Sanders J.N."/>
            <person name="Brown W.C."/>
            <person name="Zhao L."/>
            <person name="Paton R.S."/>
            <person name="Houk K.N."/>
            <person name="Smith J.L."/>
            <person name="Sherman D.H."/>
            <person name="Williams R.M."/>
        </authorList>
    </citation>
    <scope>FUNCTION</scope>
    <scope>CATALYTIC ACTIVITY</scope>
    <scope>PATHWAY</scope>
</reference>
<keyword id="KW-0637">Prenyltransferase</keyword>
<keyword id="KW-0808">Transferase</keyword>
<gene>
    <name evidence="9" type="primary">malE</name>
</gene>
<organism>
    <name type="scientific">Malbranchea aurantiaca</name>
    <dbReference type="NCBI Taxonomy" id="78605"/>
    <lineage>
        <taxon>Eukaryota</taxon>
        <taxon>Fungi</taxon>
        <taxon>Dikarya</taxon>
        <taxon>Ascomycota</taxon>
        <taxon>Pezizomycotina</taxon>
        <taxon>Eurotiomycetes</taxon>
        <taxon>Eurotiomycetidae</taxon>
        <taxon>Onygenales</taxon>
        <taxon>Malbrancheaceae</taxon>
        <taxon>Malbranchea</taxon>
    </lineage>
</organism>
<comment type="function">
    <text evidence="5 7 8">Prenyltransferase; part of the gene cluster that mediates the biosynthesis of malbrancheamide, a dichlorinated fungal indole alkaloid that belongs to a family of natural products containing a characteristic bicyclo[2.2.2]diazaoctane core (PubMed:23213353, PubMed:28777910, PubMed:31548667). The first step of malbrancheamide biosynthesis involves coupling of L-proline and L-tryptophan by malG, a bimodular NRPS, to produce L-Pro-L-Trp aldehyde through reductive offloading (PubMed:23213353, PubMed:31548667). This compound undergoes spontaneous cyclization and dehydration to give a dienamine which is reverse prenylated at C-2 by malE (PubMed:31548667). The other prenyltransferase present in the cluster, malB, displays modest activity, suggesting that may be a redundant gene in the pathway (PubMed:31548667). Subsequently, a [4+2] Diels-Alder cyclo-addition catalyzed by the bifunctional enzyme malC forms the characteristic bicyclo[2.2.2]diazaoctane ring of premalbrancheamid (PubMed:31548667). Finally, the flavin-dependent halogenase malA catalyzes the iterative dichlorination of the indole ring of premalbrancheamide to yield C-9 monochlorinated malbrancheamide B, C-8 monochlorinated isomalbrancheamide B, and dichlorinated malbrancheamide (PubMed:28777910, PubMed:31548667). MalA is also able to brominate premalbrancheamide at C-9 to yield malbrancheamide C, and, to a lesser extend, at C-8 to yield isomalbrancheamide C (PubMed:28777910). Finally, malA can brominate C-9 monochlorinated malbrancheamide B at C-8 to yield malbrancheamide D, or C-8 monochlorinated isomalbrancheamide B at C-9 to produce isomalbrancheamide D (PubMed:28777910).</text>
</comment>
<comment type="catalytic activity">
    <reaction evidence="8">
        <text>(S)-3-(indol-3-ylmethyl)-6,7,8,8a-tetrahydropyrrolo[1,2-a]pyrazin-1-one + dimethylallyl diphosphate = (S)-3-{[2-(1,1-dimethylallyl)-indol-3-yl]methyl}-6,7,8,8a-tetrahydropyrrolo[1,2-a]pyrazin-1-one + diphosphate</text>
        <dbReference type="Rhea" id="RHEA:62288"/>
        <dbReference type="ChEBI" id="CHEBI:33019"/>
        <dbReference type="ChEBI" id="CHEBI:57623"/>
        <dbReference type="ChEBI" id="CHEBI:145652"/>
        <dbReference type="ChEBI" id="CHEBI:145655"/>
    </reaction>
    <physiologicalReaction direction="left-to-right" evidence="8">
        <dbReference type="Rhea" id="RHEA:62289"/>
    </physiologicalReaction>
</comment>
<comment type="catalytic activity">
    <reaction evidence="8">
        <text>1-hydroxy-3-(indol-3-ylmethyl)-6H,7H,8H-5lambda(5)-pyrrolo[1,2-a]pyrazine + dimethylallyl diphosphate = 1-hydroxy-3-{[2-(1,1-dimethylallyl)-indol-3-yl]methyl}-6H,7H,8H-5lambda(5)-pyrrolo[1,2-a]pyrazine + diphosphate</text>
        <dbReference type="Rhea" id="RHEA:62736"/>
        <dbReference type="ChEBI" id="CHEBI:33019"/>
        <dbReference type="ChEBI" id="CHEBI:57623"/>
        <dbReference type="ChEBI" id="CHEBI:145657"/>
        <dbReference type="ChEBI" id="CHEBI:145928"/>
    </reaction>
    <physiologicalReaction direction="left-to-right" evidence="8">
        <dbReference type="Rhea" id="RHEA:62737"/>
    </physiologicalReaction>
</comment>
<comment type="pathway">
    <text evidence="8">Alkaloid biosynthesis.</text>
</comment>
<comment type="biotechnology">
    <text evidence="2 3 4 6">Malbrancheamides have the ability to inhibit calmodulin, calmodulin-dependent phosphodiesterase (PDE1), and induce both endothelium-independent and endothelium-dependent relaxant effects, suggesting their potential as vasorelaxant agents.</text>
</comment>
<comment type="similarity">
    <text evidence="10">Belongs to the tryptophan dimethylallyltransferase family.</text>
</comment>
<protein>
    <recommendedName>
        <fullName evidence="9">Prenyltransferase malE</fullName>
        <ecNumber evidence="8">2.5.1.-</ecNumber>
    </recommendedName>
    <alternativeName>
        <fullName evidence="9">Malbrancheamide biosynthesis cluster protein E</fullName>
    </alternativeName>
</protein>
<proteinExistence type="evidence at protein level"/>
<dbReference type="EC" id="2.5.1.-" evidence="8"/>
<dbReference type="EMBL" id="JQ708193">
    <property type="protein sequence ID" value="AGA37265.1"/>
    <property type="molecule type" value="Genomic_DNA"/>
</dbReference>
<dbReference type="SMR" id="L0E2P7"/>
<dbReference type="BioCyc" id="MetaCyc:MONOMER-21924"/>
<dbReference type="GO" id="GO:0004659">
    <property type="term" value="F:prenyltransferase activity"/>
    <property type="evidence" value="ECO:0007669"/>
    <property type="project" value="UniProtKB-KW"/>
</dbReference>
<dbReference type="GO" id="GO:0009820">
    <property type="term" value="P:alkaloid metabolic process"/>
    <property type="evidence" value="ECO:0007669"/>
    <property type="project" value="InterPro"/>
</dbReference>
<dbReference type="CDD" id="cd13929">
    <property type="entry name" value="PT-DMATS_CymD"/>
    <property type="match status" value="1"/>
</dbReference>
<dbReference type="InterPro" id="IPR033964">
    <property type="entry name" value="Aro_prenylTrfase"/>
</dbReference>
<dbReference type="InterPro" id="IPR017795">
    <property type="entry name" value="Aro_prenylTrfase_DMATS"/>
</dbReference>
<dbReference type="InterPro" id="IPR012148">
    <property type="entry name" value="DMATS-type_fun"/>
</dbReference>
<dbReference type="NCBIfam" id="TIGR03429">
    <property type="entry name" value="arom_pren_DMATS"/>
    <property type="match status" value="1"/>
</dbReference>
<dbReference type="PANTHER" id="PTHR40627">
    <property type="entry name" value="INDOLE PRENYLTRANSFERASE TDIB-RELATED"/>
    <property type="match status" value="1"/>
</dbReference>
<dbReference type="PANTHER" id="PTHR40627:SF3">
    <property type="entry name" value="PRENYLTRANSFERASE ASQH2-RELATED"/>
    <property type="match status" value="1"/>
</dbReference>
<dbReference type="Pfam" id="PF11991">
    <property type="entry name" value="Trp_DMAT"/>
    <property type="match status" value="1"/>
</dbReference>
<dbReference type="PIRSF" id="PIRSF000509">
    <property type="entry name" value="Trp_DMAT"/>
    <property type="match status" value="1"/>
</dbReference>
<dbReference type="SFLD" id="SFLDS00036">
    <property type="entry name" value="Aromatic_Prenyltransferase"/>
    <property type="match status" value="1"/>
</dbReference>
<dbReference type="SFLD" id="SFLDG01162">
    <property type="entry name" value="I"/>
    <property type="match status" value="1"/>
</dbReference>
<accession>L0E2P7</accession>
<feature type="chain" id="PRO_0000448775" description="Prenyltransferase malE">
    <location>
        <begin position="1"/>
        <end position="438"/>
    </location>
</feature>
<feature type="binding site" evidence="1">
    <location>
        <position position="92"/>
    </location>
    <ligand>
        <name>substrate</name>
    </ligand>
</feature>
<feature type="binding site" evidence="1">
    <location>
        <position position="106"/>
    </location>
    <ligand>
        <name>dimethylallyl diphosphate</name>
        <dbReference type="ChEBI" id="CHEBI:57623"/>
    </ligand>
</feature>
<feature type="binding site" evidence="1">
    <location>
        <position position="192"/>
    </location>
    <ligand>
        <name>dimethylallyl diphosphate</name>
        <dbReference type="ChEBI" id="CHEBI:57623"/>
    </ligand>
</feature>
<feature type="binding site" evidence="1">
    <location>
        <position position="194"/>
    </location>
    <ligand>
        <name>dimethylallyl diphosphate</name>
        <dbReference type="ChEBI" id="CHEBI:57623"/>
    </ligand>
</feature>
<feature type="binding site" evidence="1">
    <location>
        <position position="259"/>
    </location>
    <ligand>
        <name>dimethylallyl diphosphate</name>
        <dbReference type="ChEBI" id="CHEBI:57623"/>
    </ligand>
</feature>
<feature type="binding site" evidence="1">
    <location>
        <position position="261"/>
    </location>
    <ligand>
        <name>dimethylallyl diphosphate</name>
        <dbReference type="ChEBI" id="CHEBI:57623"/>
    </ligand>
</feature>
<feature type="binding site" evidence="1">
    <location>
        <position position="346"/>
    </location>
    <ligand>
        <name>dimethylallyl diphosphate</name>
        <dbReference type="ChEBI" id="CHEBI:57623"/>
    </ligand>
</feature>
<feature type="binding site" evidence="1">
    <location>
        <position position="411"/>
    </location>
    <ligand>
        <name>dimethylallyl diphosphate</name>
        <dbReference type="ChEBI" id="CHEBI:57623"/>
    </ligand>
</feature>
<evidence type="ECO:0000250" key="1">
    <source>
        <dbReference type="UniProtKB" id="Q4WAW7"/>
    </source>
</evidence>
<evidence type="ECO:0000269" key="2">
    <source>
    </source>
</evidence>
<evidence type="ECO:0000269" key="3">
    <source>
    </source>
</evidence>
<evidence type="ECO:0000269" key="4">
    <source>
    </source>
</evidence>
<evidence type="ECO:0000269" key="5">
    <source>
    </source>
</evidence>
<evidence type="ECO:0000269" key="6">
    <source>
    </source>
</evidence>
<evidence type="ECO:0000269" key="7">
    <source>
    </source>
</evidence>
<evidence type="ECO:0000269" key="8">
    <source>
    </source>
</evidence>
<evidence type="ECO:0000303" key="9">
    <source>
    </source>
</evidence>
<evidence type="ECO:0000305" key="10"/>
<name>MALE_MALAU</name>